<reference key="1">
    <citation type="journal article" date="2007" name="J. Bacteriol.">
        <title>The complete genome sequence of the lactic acid bacterial paradigm Lactococcus lactis subsp. cremoris MG1363.</title>
        <authorList>
            <person name="Wegmann U."/>
            <person name="O'Connell-Motherway M."/>
            <person name="Zomer A."/>
            <person name="Buist G."/>
            <person name="Shearman C."/>
            <person name="Canchaya C."/>
            <person name="Ventura M."/>
            <person name="Goesmann A."/>
            <person name="Gasson M.J."/>
            <person name="Kuipers O.P."/>
            <person name="van Sinderen D."/>
            <person name="Kok J."/>
        </authorList>
    </citation>
    <scope>NUCLEOTIDE SEQUENCE [LARGE SCALE GENOMIC DNA]</scope>
    <source>
        <strain>MG1363</strain>
    </source>
</reference>
<sequence>MKRTYQPHKKSRKTTHGFRSRMATKNGRRVLAARRRKGRASLTV</sequence>
<accession>A2RHL6</accession>
<keyword id="KW-0002">3D-structure</keyword>
<keyword id="KW-0687">Ribonucleoprotein</keyword>
<keyword id="KW-0689">Ribosomal protein</keyword>
<feature type="chain" id="PRO_1000013361" description="Large ribosomal subunit protein bL34">
    <location>
        <begin position="1"/>
        <end position="44"/>
    </location>
</feature>
<feature type="region of interest" description="Disordered" evidence="2">
    <location>
        <begin position="1"/>
        <end position="26"/>
    </location>
</feature>
<feature type="compositionally biased region" description="Basic residues" evidence="2">
    <location>
        <begin position="1"/>
        <end position="19"/>
    </location>
</feature>
<gene>
    <name evidence="1" type="primary">rpmH</name>
    <name type="ordered locus">llmg_0145</name>
</gene>
<organism>
    <name type="scientific">Lactococcus lactis subsp. cremoris (strain MG1363)</name>
    <dbReference type="NCBI Taxonomy" id="416870"/>
    <lineage>
        <taxon>Bacteria</taxon>
        <taxon>Bacillati</taxon>
        <taxon>Bacillota</taxon>
        <taxon>Bacilli</taxon>
        <taxon>Lactobacillales</taxon>
        <taxon>Streptococcaceae</taxon>
        <taxon>Lactococcus</taxon>
        <taxon>Lactococcus cremoris subsp. cremoris</taxon>
    </lineage>
</organism>
<comment type="similarity">
    <text evidence="1">Belongs to the bacterial ribosomal protein bL34 family.</text>
</comment>
<proteinExistence type="evidence at protein level"/>
<protein>
    <recommendedName>
        <fullName evidence="1">Large ribosomal subunit protein bL34</fullName>
    </recommendedName>
    <alternativeName>
        <fullName evidence="3">50S ribosomal protein L34</fullName>
    </alternativeName>
</protein>
<name>RL34_LACLM</name>
<dbReference type="EMBL" id="AM406671">
    <property type="protein sequence ID" value="CAL96752.1"/>
    <property type="molecule type" value="Genomic_DNA"/>
</dbReference>
<dbReference type="RefSeq" id="WP_003131818.1">
    <property type="nucleotide sequence ID" value="NZ_WJVF01000001.1"/>
</dbReference>
<dbReference type="PDB" id="5MYJ">
    <property type="method" value="EM"/>
    <property type="resolution" value="5.60 A"/>
    <property type="chains" value="B6=1-44"/>
</dbReference>
<dbReference type="PDBsum" id="5MYJ"/>
<dbReference type="EMDB" id="EMD-3581"/>
<dbReference type="SMR" id="A2RHL6"/>
<dbReference type="STRING" id="416870.llmg_0145"/>
<dbReference type="GeneID" id="89632278"/>
<dbReference type="KEGG" id="llm:llmg_0145"/>
<dbReference type="eggNOG" id="COG0230">
    <property type="taxonomic scope" value="Bacteria"/>
</dbReference>
<dbReference type="HOGENOM" id="CLU_129938_2_0_9"/>
<dbReference type="PhylomeDB" id="A2RHL6"/>
<dbReference type="Proteomes" id="UP000000364">
    <property type="component" value="Chromosome"/>
</dbReference>
<dbReference type="GO" id="GO:1990904">
    <property type="term" value="C:ribonucleoprotein complex"/>
    <property type="evidence" value="ECO:0007669"/>
    <property type="project" value="UniProtKB-KW"/>
</dbReference>
<dbReference type="GO" id="GO:0005840">
    <property type="term" value="C:ribosome"/>
    <property type="evidence" value="ECO:0007669"/>
    <property type="project" value="UniProtKB-KW"/>
</dbReference>
<dbReference type="GO" id="GO:0003735">
    <property type="term" value="F:structural constituent of ribosome"/>
    <property type="evidence" value="ECO:0007669"/>
    <property type="project" value="InterPro"/>
</dbReference>
<dbReference type="GO" id="GO:0006412">
    <property type="term" value="P:translation"/>
    <property type="evidence" value="ECO:0007669"/>
    <property type="project" value="UniProtKB-UniRule"/>
</dbReference>
<dbReference type="FunFam" id="1.10.287.3980:FF:000001">
    <property type="entry name" value="Mitochondrial ribosomal protein L34"/>
    <property type="match status" value="1"/>
</dbReference>
<dbReference type="Gene3D" id="1.10.287.3980">
    <property type="match status" value="1"/>
</dbReference>
<dbReference type="HAMAP" id="MF_00391">
    <property type="entry name" value="Ribosomal_bL34"/>
    <property type="match status" value="1"/>
</dbReference>
<dbReference type="InterPro" id="IPR000271">
    <property type="entry name" value="Ribosomal_bL34"/>
</dbReference>
<dbReference type="InterPro" id="IPR020939">
    <property type="entry name" value="Ribosomal_bL34_CS"/>
</dbReference>
<dbReference type="NCBIfam" id="TIGR01030">
    <property type="entry name" value="rpmH_bact"/>
    <property type="match status" value="1"/>
</dbReference>
<dbReference type="PANTHER" id="PTHR14503:SF4">
    <property type="entry name" value="LARGE RIBOSOMAL SUBUNIT PROTEIN BL34M"/>
    <property type="match status" value="1"/>
</dbReference>
<dbReference type="PANTHER" id="PTHR14503">
    <property type="entry name" value="MITOCHONDRIAL RIBOSOMAL PROTEIN 34 FAMILY MEMBER"/>
    <property type="match status" value="1"/>
</dbReference>
<dbReference type="Pfam" id="PF00468">
    <property type="entry name" value="Ribosomal_L34"/>
    <property type="match status" value="1"/>
</dbReference>
<dbReference type="PROSITE" id="PS00784">
    <property type="entry name" value="RIBOSOMAL_L34"/>
    <property type="match status" value="1"/>
</dbReference>
<evidence type="ECO:0000255" key="1">
    <source>
        <dbReference type="HAMAP-Rule" id="MF_00391"/>
    </source>
</evidence>
<evidence type="ECO:0000256" key="2">
    <source>
        <dbReference type="SAM" id="MobiDB-lite"/>
    </source>
</evidence>
<evidence type="ECO:0000305" key="3"/>